<comment type="function">
    <text evidence="2">Involved in the biosynthetic pathway of pyrrolizwilline, a pyrrolizidine alkaloid. Catalyzes the reduction of 3-amino-tetrahydro-pyrrolizinone to 3-amino-tetrahydro-pyrrolizinol.</text>
</comment>
<comment type="catalytic activity">
    <reaction evidence="2">
        <text>3-amino-5,6,7,7a-tetrahydro-1H-pyrrolizin-1-one + AH2 = 3-amino-tetrahydro-1H-pyrrolizin-1-ol + A</text>
        <dbReference type="Rhea" id="RHEA:83311"/>
        <dbReference type="ChEBI" id="CHEBI:13193"/>
        <dbReference type="ChEBI" id="CHEBI:17499"/>
        <dbReference type="ChEBI" id="CHEBI:232462"/>
        <dbReference type="ChEBI" id="CHEBI:232512"/>
    </reaction>
    <physiologicalReaction direction="left-to-right" evidence="2">
        <dbReference type="Rhea" id="RHEA:83312"/>
    </physiologicalReaction>
</comment>
<comment type="similarity">
    <text evidence="3">Belongs to the short-chain dehydrogenases/reductases (SDR) family.</text>
</comment>
<accession>A0A2G0QDN4</accession>
<keyword id="KW-0560">Oxidoreductase</keyword>
<name>XHPD_XENHO</name>
<gene>
    <name type="primary">xhpD</name>
    <name evidence="5" type="ORF">Xhom_00313</name>
</gene>
<proteinExistence type="evidence at protein level"/>
<feature type="chain" id="PRO_0000462107" description="3-amino-tetrahydro-pyrrolizinone reductase">
    <location>
        <begin position="1"/>
        <end position="286"/>
    </location>
</feature>
<feature type="active site" description="Proton acceptor" evidence="1">
    <location>
        <position position="146"/>
    </location>
</feature>
<organism>
    <name type="scientific">Xenorhabdus hominickii</name>
    <dbReference type="NCBI Taxonomy" id="351679"/>
    <lineage>
        <taxon>Bacteria</taxon>
        <taxon>Pseudomonadati</taxon>
        <taxon>Pseudomonadota</taxon>
        <taxon>Gammaproteobacteria</taxon>
        <taxon>Enterobacterales</taxon>
        <taxon>Morganellaceae</taxon>
        <taxon>Xenorhabdus</taxon>
    </lineage>
</organism>
<reference key="1">
    <citation type="journal article" date="2017" name="Nat. Microbiol.">
        <title>Natural product diversity associated with the nematode symbionts Photorhabdus and Xenorhabdus.</title>
        <authorList>
            <person name="Tobias N.J."/>
            <person name="Wolff H."/>
            <person name="Djahanschiri B."/>
            <person name="Grundmann F."/>
            <person name="Kronenwerth M."/>
            <person name="Shi Y.M."/>
            <person name="Simonyi S."/>
            <person name="Grun P."/>
            <person name="Shapiro-Ilan D."/>
            <person name="Pidot S.J."/>
            <person name="Stinear T.P."/>
            <person name="Ebersberger I."/>
            <person name="Bode H.B."/>
        </authorList>
    </citation>
    <scope>NUCLEOTIDE SEQUENCE [LARGE SCALE GENOMIC DNA]</scope>
    <source>
        <strain>DSM 17903 / CIP 109072 / KE01</strain>
    </source>
</reference>
<reference key="2">
    <citation type="journal article" date="2024" name="Angew. Chem. Int. Ed.">
        <title>Pyrrolizwilline, a unique bacterial alkaloid assembled by a nonribosomal peptide synthetase and non-enzymatic dimerization.</title>
        <authorList>
            <person name="Effert J."/>
            <person name="Westphalen M."/>
            <person name="Calderari A."/>
            <person name="Shi Y.M."/>
            <person name="Elamri I."/>
            <person name="Najah S."/>
            <person name="Gruen P."/>
            <person name="Li Y."/>
            <person name="Gruez A."/>
            <person name="Weissman K.J."/>
            <person name="Bode H.B."/>
        </authorList>
    </citation>
    <scope>FUNCTION</scope>
    <scope>CATALYTIC ACTIVITY</scope>
    <source>
        <strain>DSM 17903 / CIP 109072 / KE01</strain>
    </source>
</reference>
<dbReference type="EC" id="1.1.-.-" evidence="2"/>
<dbReference type="EMBL" id="NJAI01000001">
    <property type="protein sequence ID" value="PHM57347.1"/>
    <property type="molecule type" value="Genomic_DNA"/>
</dbReference>
<dbReference type="RefSeq" id="WP_069317107.1">
    <property type="nucleotide sequence ID" value="NZ_CAWNQJ010000001.1"/>
</dbReference>
<dbReference type="STRING" id="351679.A9255_13060"/>
<dbReference type="KEGG" id="xho:A9255_13060"/>
<dbReference type="OrthoDB" id="9804774at2"/>
<dbReference type="Proteomes" id="UP000225433">
    <property type="component" value="Unassembled WGS sequence"/>
</dbReference>
<dbReference type="GO" id="GO:0016491">
    <property type="term" value="F:oxidoreductase activity"/>
    <property type="evidence" value="ECO:0007669"/>
    <property type="project" value="TreeGrafter"/>
</dbReference>
<dbReference type="GO" id="GO:0008202">
    <property type="term" value="P:steroid metabolic process"/>
    <property type="evidence" value="ECO:0007669"/>
    <property type="project" value="TreeGrafter"/>
</dbReference>
<dbReference type="Gene3D" id="3.40.50.720">
    <property type="entry name" value="NAD(P)-binding Rossmann-like Domain"/>
    <property type="match status" value="1"/>
</dbReference>
<dbReference type="InterPro" id="IPR036291">
    <property type="entry name" value="NAD(P)-bd_dom_sf"/>
</dbReference>
<dbReference type="InterPro" id="IPR002347">
    <property type="entry name" value="SDR_fam"/>
</dbReference>
<dbReference type="PANTHER" id="PTHR43313:SF1">
    <property type="entry name" value="3BETA-HYDROXYSTEROID DEHYDROGENASE DHS-16"/>
    <property type="match status" value="1"/>
</dbReference>
<dbReference type="PANTHER" id="PTHR43313">
    <property type="entry name" value="SHORT-CHAIN DEHYDROGENASE/REDUCTASE FAMILY 9C"/>
    <property type="match status" value="1"/>
</dbReference>
<dbReference type="Pfam" id="PF00106">
    <property type="entry name" value="adh_short"/>
    <property type="match status" value="1"/>
</dbReference>
<dbReference type="PRINTS" id="PR00081">
    <property type="entry name" value="GDHRDH"/>
</dbReference>
<dbReference type="PRINTS" id="PR00080">
    <property type="entry name" value="SDRFAMILY"/>
</dbReference>
<dbReference type="SUPFAM" id="SSF51735">
    <property type="entry name" value="NAD(P)-binding Rossmann-fold domains"/>
    <property type="match status" value="1"/>
</dbReference>
<evidence type="ECO:0000250" key="1">
    <source>
        <dbReference type="UniProtKB" id="P00334"/>
    </source>
</evidence>
<evidence type="ECO:0000269" key="2">
    <source>
    </source>
</evidence>
<evidence type="ECO:0000305" key="3"/>
<evidence type="ECO:0000305" key="4">
    <source>
    </source>
</evidence>
<evidence type="ECO:0000312" key="5">
    <source>
        <dbReference type="EMBL" id="PHM57347.1"/>
    </source>
</evidence>
<sequence length="286" mass="32221">MTRKSILVTGASSGLGYAAVQKLAENGFYVFAAVREIRGMFSNIKNIKELKLDLANEQSIEELFIYIEATQKDYPLWGLVNNAGICVPSPLELLREFDLRQQLDTNVIGQLLVTQFALPFIRKSKGRIINITSGLGSIAVPYLGAYSIAQFAKMAFTDVLRRELKHSGVTVSVVQPGAIYTPIWDKFLVTGQEILDNSLDEKRKIYERSFIEFLKASQIGVNSVKTTRNDFAKVILDIFKAEIPETHYYVGDDAKNFSNKSKILTVTEIDEWFDLQSPTESEFKKI</sequence>
<protein>
    <recommendedName>
        <fullName evidence="4">3-amino-tetrahydro-pyrrolizinone reductase</fullName>
        <ecNumber evidence="2">1.1.-.-</ecNumber>
    </recommendedName>
</protein>